<reference key="1">
    <citation type="journal article" date="2003" name="Proc. Natl. Acad. Sci. U.S.A.">
        <title>Complete genome sequence of the marine planctomycete Pirellula sp. strain 1.</title>
        <authorList>
            <person name="Gloeckner F.O."/>
            <person name="Kube M."/>
            <person name="Bauer M."/>
            <person name="Teeling H."/>
            <person name="Lombardot T."/>
            <person name="Ludwig W."/>
            <person name="Gade D."/>
            <person name="Beck A."/>
            <person name="Borzym K."/>
            <person name="Heitmann K."/>
            <person name="Rabus R."/>
            <person name="Schlesner H."/>
            <person name="Amann R."/>
            <person name="Reinhardt R."/>
        </authorList>
    </citation>
    <scope>NUCLEOTIDE SEQUENCE [LARGE SCALE GENOMIC DNA]</scope>
    <source>
        <strain>DSM 10527 / NCIMB 13988 / SH1</strain>
    </source>
</reference>
<gene>
    <name evidence="1" type="primary">uppS</name>
    <name type="ordered locus">RB10335</name>
</gene>
<accession>Q7UF53</accession>
<proteinExistence type="inferred from homology"/>
<dbReference type="EC" id="2.5.1.-" evidence="1"/>
<dbReference type="EMBL" id="BX294151">
    <property type="protein sequence ID" value="CAD78830.1"/>
    <property type="molecule type" value="Genomic_DNA"/>
</dbReference>
<dbReference type="RefSeq" id="NP_869373.1">
    <property type="nucleotide sequence ID" value="NC_005027.1"/>
</dbReference>
<dbReference type="RefSeq" id="WP_007328291.1">
    <property type="nucleotide sequence ID" value="NC_005027.1"/>
</dbReference>
<dbReference type="SMR" id="Q7UF53"/>
<dbReference type="FunCoup" id="Q7UF53">
    <property type="interactions" value="468"/>
</dbReference>
<dbReference type="STRING" id="243090.RB10335"/>
<dbReference type="EnsemblBacteria" id="CAD78830">
    <property type="protein sequence ID" value="CAD78830"/>
    <property type="gene ID" value="RB10335"/>
</dbReference>
<dbReference type="KEGG" id="rba:RB10335"/>
<dbReference type="PATRIC" id="fig|243090.15.peg.5000"/>
<dbReference type="eggNOG" id="COG0020">
    <property type="taxonomic scope" value="Bacteria"/>
</dbReference>
<dbReference type="HOGENOM" id="CLU_038505_1_1_0"/>
<dbReference type="InParanoid" id="Q7UF53"/>
<dbReference type="OrthoDB" id="4191603at2"/>
<dbReference type="Proteomes" id="UP000001025">
    <property type="component" value="Chromosome"/>
</dbReference>
<dbReference type="GO" id="GO:0000287">
    <property type="term" value="F:magnesium ion binding"/>
    <property type="evidence" value="ECO:0007669"/>
    <property type="project" value="UniProtKB-UniRule"/>
</dbReference>
<dbReference type="GO" id="GO:0004659">
    <property type="term" value="F:prenyltransferase activity"/>
    <property type="evidence" value="ECO:0007669"/>
    <property type="project" value="UniProtKB-UniRule"/>
</dbReference>
<dbReference type="GO" id="GO:0016094">
    <property type="term" value="P:polyprenol biosynthetic process"/>
    <property type="evidence" value="ECO:0000318"/>
    <property type="project" value="GO_Central"/>
</dbReference>
<dbReference type="CDD" id="cd00475">
    <property type="entry name" value="Cis_IPPS"/>
    <property type="match status" value="1"/>
</dbReference>
<dbReference type="FunFam" id="3.40.1180.10:FF:000022">
    <property type="entry name" value="Isoprenyl transferase"/>
    <property type="match status" value="1"/>
</dbReference>
<dbReference type="Gene3D" id="3.40.1180.10">
    <property type="entry name" value="Decaprenyl diphosphate synthase-like"/>
    <property type="match status" value="1"/>
</dbReference>
<dbReference type="HAMAP" id="MF_01139">
    <property type="entry name" value="ISPT"/>
    <property type="match status" value="1"/>
</dbReference>
<dbReference type="InterPro" id="IPR001441">
    <property type="entry name" value="UPP_synth-like"/>
</dbReference>
<dbReference type="InterPro" id="IPR018520">
    <property type="entry name" value="UPP_synth-like_CS"/>
</dbReference>
<dbReference type="InterPro" id="IPR036424">
    <property type="entry name" value="UPP_synth-like_sf"/>
</dbReference>
<dbReference type="NCBIfam" id="TIGR00055">
    <property type="entry name" value="uppS"/>
    <property type="match status" value="1"/>
</dbReference>
<dbReference type="PANTHER" id="PTHR10291:SF0">
    <property type="entry name" value="DEHYDRODOLICHYL DIPHOSPHATE SYNTHASE 2"/>
    <property type="match status" value="1"/>
</dbReference>
<dbReference type="PANTHER" id="PTHR10291">
    <property type="entry name" value="DEHYDRODOLICHYL DIPHOSPHATE SYNTHASE FAMILY MEMBER"/>
    <property type="match status" value="1"/>
</dbReference>
<dbReference type="Pfam" id="PF01255">
    <property type="entry name" value="Prenyltransf"/>
    <property type="match status" value="1"/>
</dbReference>
<dbReference type="SUPFAM" id="SSF64005">
    <property type="entry name" value="Undecaprenyl diphosphate synthase"/>
    <property type="match status" value="1"/>
</dbReference>
<dbReference type="PROSITE" id="PS01066">
    <property type="entry name" value="UPP_SYNTHASE"/>
    <property type="match status" value="1"/>
</dbReference>
<organism>
    <name type="scientific">Rhodopirellula baltica (strain DSM 10527 / NCIMB 13988 / SH1)</name>
    <dbReference type="NCBI Taxonomy" id="243090"/>
    <lineage>
        <taxon>Bacteria</taxon>
        <taxon>Pseudomonadati</taxon>
        <taxon>Planctomycetota</taxon>
        <taxon>Planctomycetia</taxon>
        <taxon>Pirellulales</taxon>
        <taxon>Pirellulaceae</taxon>
        <taxon>Rhodopirellula</taxon>
    </lineage>
</organism>
<comment type="function">
    <text evidence="1">Catalyzes the condensation of isopentenyl diphosphate (IPP) with allylic pyrophosphates generating different type of terpenoids.</text>
</comment>
<comment type="cofactor">
    <cofactor evidence="1">
        <name>Mg(2+)</name>
        <dbReference type="ChEBI" id="CHEBI:18420"/>
    </cofactor>
    <text evidence="1">Binds 2 magnesium ions per subunit.</text>
</comment>
<comment type="subunit">
    <text evidence="1">Homodimer.</text>
</comment>
<comment type="similarity">
    <text evidence="1">Belongs to the UPP synthase family.</text>
</comment>
<feature type="chain" id="PRO_0000123660" description="Isoprenyl transferase">
    <location>
        <begin position="1"/>
        <end position="244"/>
    </location>
</feature>
<feature type="active site" evidence="1">
    <location>
        <position position="20"/>
    </location>
</feature>
<feature type="active site" description="Proton acceptor" evidence="1">
    <location>
        <position position="68"/>
    </location>
</feature>
<feature type="binding site" evidence="1">
    <location>
        <position position="20"/>
    </location>
    <ligand>
        <name>Mg(2+)</name>
        <dbReference type="ChEBI" id="CHEBI:18420"/>
    </ligand>
</feature>
<feature type="binding site" evidence="1">
    <location>
        <begin position="21"/>
        <end position="24"/>
    </location>
    <ligand>
        <name>substrate</name>
    </ligand>
</feature>
<feature type="binding site" evidence="1">
    <location>
        <position position="25"/>
    </location>
    <ligand>
        <name>substrate</name>
    </ligand>
</feature>
<feature type="binding site" evidence="1">
    <location>
        <position position="33"/>
    </location>
    <ligand>
        <name>substrate</name>
    </ligand>
</feature>
<feature type="binding site" evidence="1">
    <location>
        <position position="37"/>
    </location>
    <ligand>
        <name>substrate</name>
    </ligand>
</feature>
<feature type="binding site" evidence="1">
    <location>
        <begin position="65"/>
        <end position="67"/>
    </location>
    <ligand>
        <name>substrate</name>
    </ligand>
</feature>
<feature type="binding site" evidence="1">
    <location>
        <position position="69"/>
    </location>
    <ligand>
        <name>substrate</name>
    </ligand>
</feature>
<feature type="binding site" evidence="1">
    <location>
        <position position="71"/>
    </location>
    <ligand>
        <name>substrate</name>
    </ligand>
</feature>
<feature type="binding site" evidence="1">
    <location>
        <position position="188"/>
    </location>
    <ligand>
        <name>substrate</name>
    </ligand>
</feature>
<feature type="binding site" evidence="1">
    <location>
        <begin position="194"/>
        <end position="196"/>
    </location>
    <ligand>
        <name>substrate</name>
    </ligand>
</feature>
<feature type="binding site" evidence="1">
    <location>
        <position position="207"/>
    </location>
    <ligand>
        <name>Mg(2+)</name>
        <dbReference type="ChEBI" id="CHEBI:18420"/>
    </ligand>
</feature>
<protein>
    <recommendedName>
        <fullName evidence="1">Isoprenyl transferase</fullName>
        <ecNumber evidence="1">2.5.1.-</ecNumber>
    </recommendedName>
</protein>
<keyword id="KW-0460">Magnesium</keyword>
<keyword id="KW-0479">Metal-binding</keyword>
<keyword id="KW-1185">Reference proteome</keyword>
<keyword id="KW-0808">Transferase</keyword>
<name>ISPT_RHOBA</name>
<sequence length="244" mass="28050">MTSVPLLSMNLPRHVAIIMDGNGRWAQARDLPRIEGHRRGVTTVRTVTEMASELKLDALTLYCLSSENWKRPQAELDFLMHLLQQYLVEERRTIRDQNMRLRFIGRRDRLSDEVLKEIAKTQAVSENNTGTELVLAVDYGGRDELTRMTRQLAQQVRDGERSIDEITESLVDESLDTAGLPDVDLMIRTGGDIRISNYLLWQISYAELYFTPKCWPEFERDDFQAALDEFAGRQRRFGGLNVGA</sequence>
<evidence type="ECO:0000255" key="1">
    <source>
        <dbReference type="HAMAP-Rule" id="MF_01139"/>
    </source>
</evidence>